<keyword id="KW-1003">Cell membrane</keyword>
<keyword id="KW-1015">Disulfide bond</keyword>
<keyword id="KW-0325">Glycoprotein</keyword>
<keyword id="KW-0378">Hydrolase</keyword>
<keyword id="KW-0458">Lysosome</keyword>
<keyword id="KW-0472">Membrane</keyword>
<keyword id="KW-0645">Protease</keyword>
<keyword id="KW-1185">Reference proteome</keyword>
<keyword id="KW-0964">Secreted</keyword>
<keyword id="KW-0732">Signal</keyword>
<keyword id="KW-0788">Thiol protease</keyword>
<keyword id="KW-0865">Zymogen</keyword>
<gene>
    <name type="primary">CTSK</name>
</gene>
<accession>P61276</accession>
<accession>O77641</accession>
<feature type="signal peptide" evidence="3">
    <location>
        <begin position="1"/>
        <end position="15"/>
    </location>
</feature>
<feature type="propeptide" id="PRO_0000026297" description="Activation peptide">
    <location>
        <begin position="16"/>
        <end position="114"/>
    </location>
</feature>
<feature type="chain" id="PRO_0000026298" description="Cathepsin K">
    <location>
        <begin position="115"/>
        <end position="329"/>
    </location>
</feature>
<feature type="active site" evidence="1">
    <location>
        <position position="139"/>
    </location>
</feature>
<feature type="active site" evidence="1">
    <location>
        <position position="276"/>
    </location>
</feature>
<feature type="active site" evidence="1">
    <location>
        <position position="296"/>
    </location>
</feature>
<feature type="glycosylation site" description="N-linked (GlcNAc...) asparagine" evidence="3">
    <location>
        <position position="103"/>
    </location>
</feature>
<feature type="disulfide bond" evidence="1">
    <location>
        <begin position="136"/>
        <end position="177"/>
    </location>
</feature>
<feature type="disulfide bond" evidence="1">
    <location>
        <begin position="170"/>
        <end position="210"/>
    </location>
</feature>
<feature type="disulfide bond" evidence="1">
    <location>
        <begin position="269"/>
        <end position="318"/>
    </location>
</feature>
<evidence type="ECO:0000250" key="1"/>
<evidence type="ECO:0000250" key="2">
    <source>
        <dbReference type="UniProtKB" id="P43235"/>
    </source>
</evidence>
<evidence type="ECO:0000255" key="3"/>
<evidence type="ECO:0000255" key="4">
    <source>
        <dbReference type="PROSITE-ProRule" id="PRU10088"/>
    </source>
</evidence>
<evidence type="ECO:0000255" key="5">
    <source>
        <dbReference type="PROSITE-ProRule" id="PRU10089"/>
    </source>
</evidence>
<evidence type="ECO:0000255" key="6">
    <source>
        <dbReference type="PROSITE-ProRule" id="PRU10090"/>
    </source>
</evidence>
<comment type="function">
    <text evidence="2">Thiol protease involved in osteoclastic bone resorption and may participate partially in the disorder of bone remodeling. Displays potent endoprotease activity against fibrinogen at acid pH. May play an important role in extracellular matrix degradation. Involved in the release of thyroid hormone thyroxine (T4) by limited proteolysis of TG/thyroglobulin in the thyroid follicle lumen.</text>
</comment>
<comment type="catalytic activity">
    <reaction>
        <text>Broad proteolytic activity. With small-molecule substrates and inhibitors, the major determinant of specificity is P2, which is preferably Leu, Met &gt; Phe, and not Arg.</text>
        <dbReference type="EC" id="3.4.22.38"/>
    </reaction>
</comment>
<comment type="subcellular location">
    <subcellularLocation>
        <location evidence="2">Lysosome</location>
    </subcellularLocation>
    <subcellularLocation>
        <location evidence="2">Secreted</location>
    </subcellularLocation>
    <subcellularLocation>
        <location evidence="2">Apical cell membrane</location>
        <topology evidence="2">Peripheral membrane protein</topology>
        <orientation evidence="2">Extracellular side</orientation>
    </subcellularLocation>
    <text evidence="2">Localizes to the lumen of thyroid follicles and to the apical membrane of thyroid epithelial cells.</text>
</comment>
<comment type="similarity">
    <text evidence="4 5 6">Belongs to the peptidase C1 family.</text>
</comment>
<reference key="1">
    <citation type="submission" date="1998-06" db="EMBL/GenBank/DDBJ databases">
        <authorList>
            <person name="Feild J.A."/>
            <person name="Brun K.A."/>
            <person name="McQueney M.S."/>
            <person name="Amegdazie B.Y."/>
        </authorList>
    </citation>
    <scope>NUCLEOTIDE SEQUENCE [MRNA]</scope>
    <source>
        <tissue>Bone marrow</tissue>
    </source>
</reference>
<sequence>MWGLKVLLLPVMSFALYPEEILDTHWELWKKTHRKQYNSKVDEISRRLIWEKNLKYISIHNLEASLGVHTYELAMNHLGDMTNEEVVQKMTGLKVPASHSRSNDTLYIPDWEGRAPDSVDYRKKGYVTPVKNQGQCGSCWAFSSVGALEGQLKKKTGKLLNLSPQNLVDCVSENDGCGGGYMTNAFQYVQKNRGIDSEDAYPYVGQEESCMYNPTGKAAKCRGYREIPEGNEKALKRAVARVGPVSVAIDASLTSFQFYSKGVYYDESCNSDNLNHAVLAVGYGIQKGNKHWIIKNSWGENWGNKGYILMARNKNNACGIANLASFPKM</sequence>
<protein>
    <recommendedName>
        <fullName>Cathepsin K</fullName>
        <ecNumber>3.4.22.38</ecNumber>
    </recommendedName>
</protein>
<organism>
    <name type="scientific">Macaca fascicularis</name>
    <name type="common">Crab-eating macaque</name>
    <name type="synonym">Cynomolgus monkey</name>
    <dbReference type="NCBI Taxonomy" id="9541"/>
    <lineage>
        <taxon>Eukaryota</taxon>
        <taxon>Metazoa</taxon>
        <taxon>Chordata</taxon>
        <taxon>Craniata</taxon>
        <taxon>Vertebrata</taxon>
        <taxon>Euteleostomi</taxon>
        <taxon>Mammalia</taxon>
        <taxon>Eutheria</taxon>
        <taxon>Euarchontoglires</taxon>
        <taxon>Primates</taxon>
        <taxon>Haplorrhini</taxon>
        <taxon>Catarrhini</taxon>
        <taxon>Cercopithecidae</taxon>
        <taxon>Cercopithecinae</taxon>
        <taxon>Macaca</taxon>
    </lineage>
</organism>
<proteinExistence type="evidence at transcript level"/>
<dbReference type="EC" id="3.4.22.38"/>
<dbReference type="EMBL" id="AF070927">
    <property type="protein sequence ID" value="AAC23694.1"/>
    <property type="molecule type" value="mRNA"/>
</dbReference>
<dbReference type="RefSeq" id="NP_001306324.1">
    <property type="nucleotide sequence ID" value="NM_001319395.1"/>
</dbReference>
<dbReference type="RefSeq" id="XP_005542025.2">
    <property type="nucleotide sequence ID" value="XM_005541968.3"/>
</dbReference>
<dbReference type="RefSeq" id="XP_045220208.1">
    <property type="nucleotide sequence ID" value="XM_045364273.2"/>
</dbReference>
<dbReference type="SMR" id="P61276"/>
<dbReference type="STRING" id="9541.ENSMFAP00000045350"/>
<dbReference type="GlyCosmos" id="P61276">
    <property type="glycosylation" value="1 site, No reported glycans"/>
</dbReference>
<dbReference type="GeneID" id="102120416"/>
<dbReference type="KEGG" id="mcf:102120416"/>
<dbReference type="CTD" id="1513"/>
<dbReference type="VEuPathDB" id="HostDB:ENSMFAG00000000402"/>
<dbReference type="eggNOG" id="KOG1543">
    <property type="taxonomic scope" value="Eukaryota"/>
</dbReference>
<dbReference type="OMA" id="EGETCCC"/>
<dbReference type="Proteomes" id="UP000233100">
    <property type="component" value="Chromosome 1"/>
</dbReference>
<dbReference type="GO" id="GO:0016324">
    <property type="term" value="C:apical plasma membrane"/>
    <property type="evidence" value="ECO:0007669"/>
    <property type="project" value="UniProtKB-SubCell"/>
</dbReference>
<dbReference type="GO" id="GO:0005615">
    <property type="term" value="C:extracellular space"/>
    <property type="evidence" value="ECO:0000250"/>
    <property type="project" value="UniProtKB"/>
</dbReference>
<dbReference type="GO" id="GO:0005764">
    <property type="term" value="C:lysosome"/>
    <property type="evidence" value="ECO:0000250"/>
    <property type="project" value="UniProtKB"/>
</dbReference>
<dbReference type="GO" id="GO:0004197">
    <property type="term" value="F:cysteine-type endopeptidase activity"/>
    <property type="evidence" value="ECO:0007669"/>
    <property type="project" value="UniProtKB-EC"/>
</dbReference>
<dbReference type="GO" id="GO:0006508">
    <property type="term" value="P:proteolysis"/>
    <property type="evidence" value="ECO:0007669"/>
    <property type="project" value="UniProtKB-KW"/>
</dbReference>
<dbReference type="GO" id="GO:0006590">
    <property type="term" value="P:thyroid hormone generation"/>
    <property type="evidence" value="ECO:0000250"/>
    <property type="project" value="UniProtKB"/>
</dbReference>
<dbReference type="CDD" id="cd02248">
    <property type="entry name" value="Peptidase_C1A"/>
    <property type="match status" value="1"/>
</dbReference>
<dbReference type="FunFam" id="3.90.70.10:FF:000006">
    <property type="entry name" value="Cathepsin S"/>
    <property type="match status" value="1"/>
</dbReference>
<dbReference type="Gene3D" id="3.90.70.10">
    <property type="entry name" value="Cysteine proteinases"/>
    <property type="match status" value="1"/>
</dbReference>
<dbReference type="InterPro" id="IPR038765">
    <property type="entry name" value="Papain-like_cys_pep_sf"/>
</dbReference>
<dbReference type="InterPro" id="IPR025661">
    <property type="entry name" value="Pept_asp_AS"/>
</dbReference>
<dbReference type="InterPro" id="IPR000169">
    <property type="entry name" value="Pept_cys_AS"/>
</dbReference>
<dbReference type="InterPro" id="IPR025660">
    <property type="entry name" value="Pept_his_AS"/>
</dbReference>
<dbReference type="InterPro" id="IPR013128">
    <property type="entry name" value="Peptidase_C1A"/>
</dbReference>
<dbReference type="InterPro" id="IPR000668">
    <property type="entry name" value="Peptidase_C1A_C"/>
</dbReference>
<dbReference type="InterPro" id="IPR039417">
    <property type="entry name" value="Peptidase_C1A_papain-like"/>
</dbReference>
<dbReference type="InterPro" id="IPR013201">
    <property type="entry name" value="Prot_inhib_I29"/>
</dbReference>
<dbReference type="PANTHER" id="PTHR12411">
    <property type="entry name" value="CYSTEINE PROTEASE FAMILY C1-RELATED"/>
    <property type="match status" value="1"/>
</dbReference>
<dbReference type="Pfam" id="PF08246">
    <property type="entry name" value="Inhibitor_I29"/>
    <property type="match status" value="1"/>
</dbReference>
<dbReference type="Pfam" id="PF00112">
    <property type="entry name" value="Peptidase_C1"/>
    <property type="match status" value="1"/>
</dbReference>
<dbReference type="PRINTS" id="PR00705">
    <property type="entry name" value="PAPAIN"/>
</dbReference>
<dbReference type="SMART" id="SM00848">
    <property type="entry name" value="Inhibitor_I29"/>
    <property type="match status" value="1"/>
</dbReference>
<dbReference type="SMART" id="SM00645">
    <property type="entry name" value="Pept_C1"/>
    <property type="match status" value="1"/>
</dbReference>
<dbReference type="SUPFAM" id="SSF54001">
    <property type="entry name" value="Cysteine proteinases"/>
    <property type="match status" value="1"/>
</dbReference>
<dbReference type="PROSITE" id="PS00640">
    <property type="entry name" value="THIOL_PROTEASE_ASN"/>
    <property type="match status" value="1"/>
</dbReference>
<dbReference type="PROSITE" id="PS00139">
    <property type="entry name" value="THIOL_PROTEASE_CYS"/>
    <property type="match status" value="1"/>
</dbReference>
<dbReference type="PROSITE" id="PS00639">
    <property type="entry name" value="THIOL_PROTEASE_HIS"/>
    <property type="match status" value="1"/>
</dbReference>
<name>CATK_MACFA</name>